<feature type="chain" id="PRO_0000066759" description="Toxin Cg2">
    <location>
        <begin position="1"/>
        <end position="68"/>
    </location>
</feature>
<feature type="domain" description="LCN-type CS-alpha/beta" evidence="1">
    <location>
        <begin position="1"/>
        <end position="66"/>
    </location>
</feature>
<feature type="disulfide bond" evidence="1">
    <location>
        <begin position="12"/>
        <end position="65"/>
    </location>
</feature>
<feature type="disulfide bond" evidence="1">
    <location>
        <begin position="16"/>
        <end position="41"/>
    </location>
</feature>
<feature type="disulfide bond" evidence="1">
    <location>
        <begin position="25"/>
        <end position="46"/>
    </location>
</feature>
<feature type="disulfide bond" evidence="1">
    <location>
        <begin position="29"/>
        <end position="48"/>
    </location>
</feature>
<comment type="function">
    <text>Binds to sodium channels (Nav) and inhibits them.</text>
</comment>
<comment type="subcellular location">
    <subcellularLocation>
        <location>Secreted</location>
    </subcellularLocation>
</comment>
<comment type="tissue specificity">
    <text>Expressed by the venom gland.</text>
</comment>
<comment type="domain">
    <text evidence="2">Has the structural arrangement of an alpha-helix connected to antiparallel beta-sheets by disulfide bonds (CS-alpha/beta).</text>
</comment>
<comment type="similarity">
    <text evidence="2">Belongs to the long (4 C-C) scorpion toxin superfamily. Sodium channel inhibitor family.</text>
</comment>
<accession>P60163</accession>
<reference key="1">
    <citation type="journal article" date="2000" name="Biochimie">
        <title>Peptides and genes coding for scorpion toxins that affect ion-channels.</title>
        <authorList>
            <person name="Possani L.D."/>
            <person name="Merino E."/>
            <person name="Corona M."/>
            <person name="Bolivar F."/>
            <person name="Becerril B."/>
        </authorList>
    </citation>
    <scope>NUCLEOTIDE SEQUENCE</scope>
    <scope>REVIEW</scope>
</reference>
<proteinExistence type="evidence at transcript level"/>
<organism>
    <name type="scientific">Centruroides gracilis</name>
    <name type="common">Slenderbrown scorpion</name>
    <name type="synonym">Florida bark scorpion</name>
    <dbReference type="NCBI Taxonomy" id="217898"/>
    <lineage>
        <taxon>Eukaryota</taxon>
        <taxon>Metazoa</taxon>
        <taxon>Ecdysozoa</taxon>
        <taxon>Arthropoda</taxon>
        <taxon>Chelicerata</taxon>
        <taxon>Arachnida</taxon>
        <taxon>Scorpiones</taxon>
        <taxon>Buthida</taxon>
        <taxon>Buthoidea</taxon>
        <taxon>Buthidae</taxon>
        <taxon>Centruroides</taxon>
    </lineage>
</organism>
<protein>
    <recommendedName>
        <fullName>Toxin Cg2</fullName>
    </recommendedName>
</protein>
<keyword id="KW-1015">Disulfide bond</keyword>
<keyword id="KW-0872">Ion channel impairing toxin</keyword>
<keyword id="KW-0528">Neurotoxin</keyword>
<keyword id="KW-0964">Secreted</keyword>
<keyword id="KW-0800">Toxin</keyword>
<keyword id="KW-0738">Voltage-gated sodium channel impairing toxin</keyword>
<name>SCX2_CENGR</name>
<sequence>KDGYLVNKSTGCKYSCIENINDSHCNEECISSIRKGSYGYCYKFYCYCIGMPDSTQVYPIPGKTCSTE</sequence>
<evidence type="ECO:0000255" key="1">
    <source>
        <dbReference type="PROSITE-ProRule" id="PRU01210"/>
    </source>
</evidence>
<evidence type="ECO:0000305" key="2"/>
<dbReference type="SMR" id="P60163"/>
<dbReference type="GO" id="GO:0005576">
    <property type="term" value="C:extracellular region"/>
    <property type="evidence" value="ECO:0007669"/>
    <property type="project" value="UniProtKB-SubCell"/>
</dbReference>
<dbReference type="GO" id="GO:0019871">
    <property type="term" value="F:sodium channel inhibitor activity"/>
    <property type="evidence" value="ECO:0007669"/>
    <property type="project" value="InterPro"/>
</dbReference>
<dbReference type="GO" id="GO:0090729">
    <property type="term" value="F:toxin activity"/>
    <property type="evidence" value="ECO:0007669"/>
    <property type="project" value="UniProtKB-KW"/>
</dbReference>
<dbReference type="GO" id="GO:0006952">
    <property type="term" value="P:defense response"/>
    <property type="evidence" value="ECO:0007669"/>
    <property type="project" value="InterPro"/>
</dbReference>
<dbReference type="CDD" id="cd23106">
    <property type="entry name" value="neurotoxins_LC_scorpion"/>
    <property type="match status" value="1"/>
</dbReference>
<dbReference type="Gene3D" id="3.30.30.10">
    <property type="entry name" value="Knottin, scorpion toxin-like"/>
    <property type="match status" value="1"/>
</dbReference>
<dbReference type="InterPro" id="IPR044062">
    <property type="entry name" value="LCN-type_CS_alpha_beta_dom"/>
</dbReference>
<dbReference type="InterPro" id="IPR003614">
    <property type="entry name" value="Scorpion_toxin-like"/>
</dbReference>
<dbReference type="InterPro" id="IPR036574">
    <property type="entry name" value="Scorpion_toxin-like_sf"/>
</dbReference>
<dbReference type="InterPro" id="IPR018218">
    <property type="entry name" value="Scorpion_toxinL"/>
</dbReference>
<dbReference type="InterPro" id="IPR002061">
    <property type="entry name" value="Scorpion_toxinL/defensin"/>
</dbReference>
<dbReference type="Pfam" id="PF00537">
    <property type="entry name" value="Toxin_3"/>
    <property type="match status" value="1"/>
</dbReference>
<dbReference type="PRINTS" id="PR00285">
    <property type="entry name" value="SCORPNTOXIN"/>
</dbReference>
<dbReference type="SMART" id="SM00505">
    <property type="entry name" value="Knot1"/>
    <property type="match status" value="1"/>
</dbReference>
<dbReference type="SUPFAM" id="SSF57095">
    <property type="entry name" value="Scorpion toxin-like"/>
    <property type="match status" value="1"/>
</dbReference>
<dbReference type="PROSITE" id="PS51863">
    <property type="entry name" value="LCN_CSAB"/>
    <property type="match status" value="1"/>
</dbReference>